<comment type="similarity">
    <text evidence="1">Belongs to the bacterial ribosomal protein bL35 family.</text>
</comment>
<keyword id="KW-1185">Reference proteome</keyword>
<keyword id="KW-0687">Ribonucleoprotein</keyword>
<keyword id="KW-0689">Ribosomal protein</keyword>
<organism>
    <name type="scientific">Nocardia farcinica (strain IFM 10152)</name>
    <dbReference type="NCBI Taxonomy" id="247156"/>
    <lineage>
        <taxon>Bacteria</taxon>
        <taxon>Bacillati</taxon>
        <taxon>Actinomycetota</taxon>
        <taxon>Actinomycetes</taxon>
        <taxon>Mycobacteriales</taxon>
        <taxon>Nocardiaceae</taxon>
        <taxon>Nocardia</taxon>
    </lineage>
</organism>
<sequence length="64" mass="7330">MPKMKSHSGASKRFKVSGKGKLLRQQANRRHLLEHKPSRRTRRLDGTEVVAAADVRRVKKLLGR</sequence>
<protein>
    <recommendedName>
        <fullName evidence="1">Large ribosomal subunit protein bL35</fullName>
    </recommendedName>
    <alternativeName>
        <fullName evidence="3">50S ribosomal protein L35</fullName>
    </alternativeName>
</protein>
<evidence type="ECO:0000255" key="1">
    <source>
        <dbReference type="HAMAP-Rule" id="MF_00514"/>
    </source>
</evidence>
<evidence type="ECO:0000256" key="2">
    <source>
        <dbReference type="SAM" id="MobiDB-lite"/>
    </source>
</evidence>
<evidence type="ECO:0000305" key="3"/>
<accession>Q5YYI0</accession>
<name>RL35_NOCFA</name>
<feature type="chain" id="PRO_0000258717" description="Large ribosomal subunit protein bL35">
    <location>
        <begin position="1"/>
        <end position="64"/>
    </location>
</feature>
<feature type="region of interest" description="Disordered" evidence="2">
    <location>
        <begin position="1"/>
        <end position="41"/>
    </location>
</feature>
<gene>
    <name evidence="1" type="primary">rpmI</name>
    <name type="ordered locus">NFA_19150</name>
</gene>
<reference key="1">
    <citation type="journal article" date="2004" name="Proc. Natl. Acad. Sci. U.S.A.">
        <title>The complete genomic sequence of Nocardia farcinica IFM 10152.</title>
        <authorList>
            <person name="Ishikawa J."/>
            <person name="Yamashita A."/>
            <person name="Mikami Y."/>
            <person name="Hoshino Y."/>
            <person name="Kurita H."/>
            <person name="Hotta K."/>
            <person name="Shiba T."/>
            <person name="Hattori M."/>
        </authorList>
    </citation>
    <scope>NUCLEOTIDE SEQUENCE [LARGE SCALE GENOMIC DNA]</scope>
    <source>
        <strain>IFM 10152</strain>
    </source>
</reference>
<proteinExistence type="inferred from homology"/>
<dbReference type="EMBL" id="AP006618">
    <property type="protein sequence ID" value="BAD56761.1"/>
    <property type="molecule type" value="Genomic_DNA"/>
</dbReference>
<dbReference type="RefSeq" id="WP_011208446.1">
    <property type="nucleotide sequence ID" value="NC_006361.1"/>
</dbReference>
<dbReference type="SMR" id="Q5YYI0"/>
<dbReference type="STRING" id="247156.NFA_19150"/>
<dbReference type="GeneID" id="61132697"/>
<dbReference type="KEGG" id="nfa:NFA_19150"/>
<dbReference type="eggNOG" id="COG0291">
    <property type="taxonomic scope" value="Bacteria"/>
</dbReference>
<dbReference type="HOGENOM" id="CLU_169643_4_2_11"/>
<dbReference type="OrthoDB" id="9804851at2"/>
<dbReference type="Proteomes" id="UP000006820">
    <property type="component" value="Chromosome"/>
</dbReference>
<dbReference type="GO" id="GO:0022625">
    <property type="term" value="C:cytosolic large ribosomal subunit"/>
    <property type="evidence" value="ECO:0007669"/>
    <property type="project" value="TreeGrafter"/>
</dbReference>
<dbReference type="GO" id="GO:0003735">
    <property type="term" value="F:structural constituent of ribosome"/>
    <property type="evidence" value="ECO:0007669"/>
    <property type="project" value="InterPro"/>
</dbReference>
<dbReference type="GO" id="GO:0006412">
    <property type="term" value="P:translation"/>
    <property type="evidence" value="ECO:0007669"/>
    <property type="project" value="UniProtKB-UniRule"/>
</dbReference>
<dbReference type="FunFam" id="4.10.410.60:FF:000001">
    <property type="entry name" value="50S ribosomal protein L35"/>
    <property type="match status" value="1"/>
</dbReference>
<dbReference type="Gene3D" id="4.10.410.60">
    <property type="match status" value="1"/>
</dbReference>
<dbReference type="HAMAP" id="MF_00514">
    <property type="entry name" value="Ribosomal_bL35"/>
    <property type="match status" value="1"/>
</dbReference>
<dbReference type="InterPro" id="IPR001706">
    <property type="entry name" value="Ribosomal_bL35"/>
</dbReference>
<dbReference type="InterPro" id="IPR021137">
    <property type="entry name" value="Ribosomal_bL35-like"/>
</dbReference>
<dbReference type="InterPro" id="IPR018265">
    <property type="entry name" value="Ribosomal_bL35_CS"/>
</dbReference>
<dbReference type="InterPro" id="IPR037229">
    <property type="entry name" value="Ribosomal_bL35_sf"/>
</dbReference>
<dbReference type="NCBIfam" id="TIGR00001">
    <property type="entry name" value="rpmI_bact"/>
    <property type="match status" value="1"/>
</dbReference>
<dbReference type="PANTHER" id="PTHR33343">
    <property type="entry name" value="54S RIBOSOMAL PROTEIN BL35M"/>
    <property type="match status" value="1"/>
</dbReference>
<dbReference type="PANTHER" id="PTHR33343:SF1">
    <property type="entry name" value="LARGE RIBOSOMAL SUBUNIT PROTEIN BL35M"/>
    <property type="match status" value="1"/>
</dbReference>
<dbReference type="Pfam" id="PF01632">
    <property type="entry name" value="Ribosomal_L35p"/>
    <property type="match status" value="1"/>
</dbReference>
<dbReference type="PRINTS" id="PR00064">
    <property type="entry name" value="RIBOSOMALL35"/>
</dbReference>
<dbReference type="SUPFAM" id="SSF143034">
    <property type="entry name" value="L35p-like"/>
    <property type="match status" value="1"/>
</dbReference>
<dbReference type="PROSITE" id="PS00936">
    <property type="entry name" value="RIBOSOMAL_L35"/>
    <property type="match status" value="1"/>
</dbReference>